<keyword id="KW-0488">Methylation</keyword>
<keyword id="KW-1185">Reference proteome</keyword>
<keyword id="KW-0687">Ribonucleoprotein</keyword>
<keyword id="KW-0689">Ribosomal protein</keyword>
<keyword id="KW-0694">RNA-binding</keyword>
<keyword id="KW-0699">rRNA-binding</keyword>
<accession>A3Q971</accession>
<comment type="function">
    <text evidence="1">Forms part of the ribosomal stalk which helps the ribosome interact with GTP-bound translation factors.</text>
</comment>
<comment type="subunit">
    <text evidence="1">Part of the ribosomal stalk of the 50S ribosomal subunit. Interacts with L10 and the large rRNA to form the base of the stalk. L10 forms an elongated spine to which L12 dimers bind in a sequential fashion forming a multimeric L10(L12)X complex.</text>
</comment>
<comment type="PTM">
    <text evidence="1">One or more lysine residues are methylated.</text>
</comment>
<comment type="similarity">
    <text evidence="1">Belongs to the universal ribosomal protein uL11 family.</text>
</comment>
<protein>
    <recommendedName>
        <fullName evidence="1">Large ribosomal subunit protein uL11</fullName>
    </recommendedName>
    <alternativeName>
        <fullName evidence="2">50S ribosomal protein L11</fullName>
    </alternativeName>
</protein>
<evidence type="ECO:0000255" key="1">
    <source>
        <dbReference type="HAMAP-Rule" id="MF_00736"/>
    </source>
</evidence>
<evidence type="ECO:0000305" key="2"/>
<dbReference type="EMBL" id="CP000606">
    <property type="protein sequence ID" value="ABO22019.1"/>
    <property type="molecule type" value="Genomic_DNA"/>
</dbReference>
<dbReference type="RefSeq" id="WP_011863956.1">
    <property type="nucleotide sequence ID" value="NC_009092.1"/>
</dbReference>
<dbReference type="SMR" id="A3Q971"/>
<dbReference type="STRING" id="323850.Shew_0147"/>
<dbReference type="KEGG" id="slo:Shew_0147"/>
<dbReference type="eggNOG" id="COG0080">
    <property type="taxonomic scope" value="Bacteria"/>
</dbReference>
<dbReference type="HOGENOM" id="CLU_074237_2_0_6"/>
<dbReference type="OrthoDB" id="9802408at2"/>
<dbReference type="Proteomes" id="UP000001558">
    <property type="component" value="Chromosome"/>
</dbReference>
<dbReference type="GO" id="GO:0022625">
    <property type="term" value="C:cytosolic large ribosomal subunit"/>
    <property type="evidence" value="ECO:0007669"/>
    <property type="project" value="TreeGrafter"/>
</dbReference>
<dbReference type="GO" id="GO:0070180">
    <property type="term" value="F:large ribosomal subunit rRNA binding"/>
    <property type="evidence" value="ECO:0007669"/>
    <property type="project" value="UniProtKB-UniRule"/>
</dbReference>
<dbReference type="GO" id="GO:0003735">
    <property type="term" value="F:structural constituent of ribosome"/>
    <property type="evidence" value="ECO:0007669"/>
    <property type="project" value="InterPro"/>
</dbReference>
<dbReference type="GO" id="GO:0006412">
    <property type="term" value="P:translation"/>
    <property type="evidence" value="ECO:0007669"/>
    <property type="project" value="UniProtKB-UniRule"/>
</dbReference>
<dbReference type="CDD" id="cd00349">
    <property type="entry name" value="Ribosomal_L11"/>
    <property type="match status" value="1"/>
</dbReference>
<dbReference type="FunFam" id="1.10.10.250:FF:000001">
    <property type="entry name" value="50S ribosomal protein L11"/>
    <property type="match status" value="1"/>
</dbReference>
<dbReference type="FunFam" id="3.30.1550.10:FF:000001">
    <property type="entry name" value="50S ribosomal protein L11"/>
    <property type="match status" value="1"/>
</dbReference>
<dbReference type="Gene3D" id="1.10.10.250">
    <property type="entry name" value="Ribosomal protein L11, C-terminal domain"/>
    <property type="match status" value="1"/>
</dbReference>
<dbReference type="Gene3D" id="3.30.1550.10">
    <property type="entry name" value="Ribosomal protein L11/L12, N-terminal domain"/>
    <property type="match status" value="1"/>
</dbReference>
<dbReference type="HAMAP" id="MF_00736">
    <property type="entry name" value="Ribosomal_uL11"/>
    <property type="match status" value="1"/>
</dbReference>
<dbReference type="InterPro" id="IPR000911">
    <property type="entry name" value="Ribosomal_uL11"/>
</dbReference>
<dbReference type="InterPro" id="IPR006519">
    <property type="entry name" value="Ribosomal_uL11_bac-typ"/>
</dbReference>
<dbReference type="InterPro" id="IPR020783">
    <property type="entry name" value="Ribosomal_uL11_C"/>
</dbReference>
<dbReference type="InterPro" id="IPR036769">
    <property type="entry name" value="Ribosomal_uL11_C_sf"/>
</dbReference>
<dbReference type="InterPro" id="IPR020785">
    <property type="entry name" value="Ribosomal_uL11_CS"/>
</dbReference>
<dbReference type="InterPro" id="IPR020784">
    <property type="entry name" value="Ribosomal_uL11_N"/>
</dbReference>
<dbReference type="InterPro" id="IPR036796">
    <property type="entry name" value="Ribosomal_uL11_N_sf"/>
</dbReference>
<dbReference type="NCBIfam" id="TIGR01632">
    <property type="entry name" value="L11_bact"/>
    <property type="match status" value="1"/>
</dbReference>
<dbReference type="PANTHER" id="PTHR11661">
    <property type="entry name" value="60S RIBOSOMAL PROTEIN L12"/>
    <property type="match status" value="1"/>
</dbReference>
<dbReference type="PANTHER" id="PTHR11661:SF1">
    <property type="entry name" value="LARGE RIBOSOMAL SUBUNIT PROTEIN UL11M"/>
    <property type="match status" value="1"/>
</dbReference>
<dbReference type="Pfam" id="PF00298">
    <property type="entry name" value="Ribosomal_L11"/>
    <property type="match status" value="1"/>
</dbReference>
<dbReference type="Pfam" id="PF03946">
    <property type="entry name" value="Ribosomal_L11_N"/>
    <property type="match status" value="1"/>
</dbReference>
<dbReference type="SMART" id="SM00649">
    <property type="entry name" value="RL11"/>
    <property type="match status" value="1"/>
</dbReference>
<dbReference type="SUPFAM" id="SSF54747">
    <property type="entry name" value="Ribosomal L11/L12e N-terminal domain"/>
    <property type="match status" value="1"/>
</dbReference>
<dbReference type="SUPFAM" id="SSF46906">
    <property type="entry name" value="Ribosomal protein L11, C-terminal domain"/>
    <property type="match status" value="1"/>
</dbReference>
<dbReference type="PROSITE" id="PS00359">
    <property type="entry name" value="RIBOSOMAL_L11"/>
    <property type="match status" value="1"/>
</dbReference>
<name>RL11_SHELP</name>
<feature type="chain" id="PRO_1000046263" description="Large ribosomal subunit protein uL11">
    <location>
        <begin position="1"/>
        <end position="142"/>
    </location>
</feature>
<reference key="1">
    <citation type="submission" date="2007-03" db="EMBL/GenBank/DDBJ databases">
        <title>Complete sequence of Shewanella loihica PV-4.</title>
        <authorList>
            <consortium name="US DOE Joint Genome Institute"/>
            <person name="Copeland A."/>
            <person name="Lucas S."/>
            <person name="Lapidus A."/>
            <person name="Barry K."/>
            <person name="Detter J.C."/>
            <person name="Glavina del Rio T."/>
            <person name="Hammon N."/>
            <person name="Israni S."/>
            <person name="Dalin E."/>
            <person name="Tice H."/>
            <person name="Pitluck S."/>
            <person name="Chain P."/>
            <person name="Malfatti S."/>
            <person name="Shin M."/>
            <person name="Vergez L."/>
            <person name="Schmutz J."/>
            <person name="Larimer F."/>
            <person name="Land M."/>
            <person name="Hauser L."/>
            <person name="Kyrpides N."/>
            <person name="Mikhailova N."/>
            <person name="Romine M.F."/>
            <person name="Serres G."/>
            <person name="Fredrickson J."/>
            <person name="Tiedje J."/>
            <person name="Richardson P."/>
        </authorList>
    </citation>
    <scope>NUCLEOTIDE SEQUENCE [LARGE SCALE GENOMIC DNA]</scope>
    <source>
        <strain>ATCC BAA-1088 / PV-4</strain>
    </source>
</reference>
<organism>
    <name type="scientific">Shewanella loihica (strain ATCC BAA-1088 / PV-4)</name>
    <dbReference type="NCBI Taxonomy" id="323850"/>
    <lineage>
        <taxon>Bacteria</taxon>
        <taxon>Pseudomonadati</taxon>
        <taxon>Pseudomonadota</taxon>
        <taxon>Gammaproteobacteria</taxon>
        <taxon>Alteromonadales</taxon>
        <taxon>Shewanellaceae</taxon>
        <taxon>Shewanella</taxon>
    </lineage>
</organism>
<gene>
    <name evidence="1" type="primary">rplK</name>
    <name type="ordered locus">Shew_0147</name>
</gene>
<sequence>MAKKVDGYIKLQVAAGAANPSPPVGPALGQKGVNIMEFCKAFNARTEKFEKGMPIPVVITVYTDRSFTFETKTPPASFLLLKAAGLKSGSGRPNTEKVGTIKRSAVQEIAETKAADMTGADIEAMTRSIEGTARSMGLVVED</sequence>
<proteinExistence type="inferred from homology"/>